<keyword id="KW-0009">Actin-binding</keyword>
<keyword id="KW-0112">Calmodulin-binding</keyword>
<keyword id="KW-0131">Cell cycle</keyword>
<keyword id="KW-0132">Cell division</keyword>
<keyword id="KW-0963">Cytoplasm</keyword>
<keyword id="KW-0206">Cytoskeleton</keyword>
<keyword id="KW-0325">Glycoprotein</keyword>
<keyword id="KW-0498">Mitosis</keyword>
<keyword id="KW-0539">Nucleus</keyword>
<keyword id="KW-0597">Phosphoprotein</keyword>
<keyword id="KW-1185">Reference proteome</keyword>
<keyword id="KW-0813">Transport</keyword>
<accession>Q6Q7P4</accession>
<evidence type="ECO:0000250" key="1"/>
<evidence type="ECO:0000250" key="2">
    <source>
        <dbReference type="UniProtKB" id="P11171"/>
    </source>
</evidence>
<evidence type="ECO:0000250" key="3">
    <source>
        <dbReference type="UniProtKB" id="P48193"/>
    </source>
</evidence>
<evidence type="ECO:0000255" key="4">
    <source>
        <dbReference type="PROSITE-ProRule" id="PRU00084"/>
    </source>
</evidence>
<evidence type="ECO:0000256" key="5">
    <source>
        <dbReference type="SAM" id="MobiDB-lite"/>
    </source>
</evidence>
<reference key="1">
    <citation type="journal article" date="2005" name="Mol. Biol. Cell">
        <title>Mitotic regulation of protein 4.1R involves phosphorylation by cdc2 kinase.</title>
        <authorList>
            <person name="Huang S.-C."/>
            <person name="Liu E.S."/>
            <person name="Chan S.-H."/>
            <person name="Munagala I.D."/>
            <person name="Cho H.T."/>
            <person name="Jagadeeswaran R."/>
            <person name="Benz E.J. Jr."/>
        </authorList>
    </citation>
    <scope>NUCLEOTIDE SEQUENCE [MRNA]</scope>
    <source>
        <strain>Cocker spaniel</strain>
        <tissue>Kidney</tissue>
    </source>
</reference>
<proteinExistence type="evidence at transcript level"/>
<sequence length="810" mass="90688">MTTEKSLVAEAENSQHQQQKEEGEGVTNSGQQETQLEELSQEAAEGDNHCEQKLKTSNGDTPTHEDLTKNKERTSENRGLSRLFSSFLKRPKSQVSEEEGKDVESAKEKCEGGQKEIEFGTSLDEEIILKAPIAAPEPELKTDPSLDLHSLSSAETQPAQEEHREDPDFETKEGGGLEECSKIEVKEESPESKAERELKASQKSIRRHRNMHCKVSLLDDTVYECVVEKHAKGQDLLKRVCEHLNLLEEDYFGLAIWDNGASKTWLDSAKEIKKQVRGVPWNFTFNVKFYPPDPAQLTEDITRYYLCLQLRQDIVSGRLPCSFATLALLGSYTIQSELGDYDPELHGAEYVSDFKLAPNQTKELEEKVMELHKSYRSMTPAQADLEFLENAKKLSMYGVDLHKAKDLEGVDIILGVCSSGLLVYKDKLRINRFPWPKVLKISYKRSSFFIKIRPGEQEQYESTIGFKLPSYRAAKKLWKVCVEHHTFFRLTSTDTLPKSKFLALGSKFRYSGRTQAQTRQASALIDRPAPHFERTASKRASRSLDGAAAVDSDRSPRPTSAPAIAQSQDAEGTVPGAPVKKTVVSKAQKETVKDEEKKEEGPPDQAEPEPTEVWKDLDKSQEEIKKHHASISELKKNFMESVPEPRPSEWDKRLSTHSPFRTLNINGQLPTGEGPPLVKTQTVTISDTANSVKSEIPTKDVPIVHTETKTITYEAAQTDDSNGDLDPGVLLTAQTITSETTSSTTTTQITKTVKGGISETRIEKRIVITGDADIDHDQVLVQAIKEAKEQHPDMSVTKVVVHQETEISEE</sequence>
<comment type="function">
    <text evidence="2">Protein 4.1 is a major structural element of the erythrocyte membrane skeleton. It plays a key role in regulating membrane physical properties of mechanical stability and deformability by stabilizing spectrin-actin interaction. Recruits DLG1 to membranes. Required for dynein-dynactin complex and NUMA1 recruitment at the mitotic cell cortex during anaphase.</text>
</comment>
<comment type="subunit">
    <text evidence="2 3">Binds with a high affinity to glycophorin and with lower affinity to band III protein. Associates with the nuclear mitotic apparatus. Binds calmodulin, CPAP and DLG1. Also found to associate with contractile apparatus and tight junctions. Interacts with NUMA1; this interaction is negatively regulated by CDK1 during metaphase and promotes for anaphase-specific localization of NUMA1 in symmetrically dividing cells. Interacts with ATP2B1; regulates small intestinal calcium absorption through regulation of membrane expression of ATP2B1 (By similarity).</text>
</comment>
<comment type="subcellular location">
    <subcellularLocation>
        <location evidence="2">Nucleus</location>
    </subcellularLocation>
    <subcellularLocation>
        <location evidence="2">Cytoplasm</location>
        <location evidence="2">Cytoskeleton</location>
    </subcellularLocation>
    <subcellularLocation>
        <location evidence="2">Cytoplasm</location>
        <location evidence="2">Cell cortex</location>
    </subcellularLocation>
</comment>
<comment type="PTM">
    <text evidence="1">O-glycosylated; contains N-acetylglucosamine side chains in the C-terminal domain.</text>
</comment>
<comment type="PTM">
    <text evidence="1">Phosphorylated at multiple sites by different protein kinases and each phosphorylation event selectively modulates the protein's functions.</text>
</comment>
<feature type="chain" id="PRO_0000219389" description="Protein 4.1">
    <location>
        <begin position="1"/>
        <end position="810"/>
    </location>
</feature>
<feature type="domain" description="FERM" evidence="4">
    <location>
        <begin position="211"/>
        <end position="492"/>
    </location>
</feature>
<feature type="region of interest" description="Disordered" evidence="5">
    <location>
        <begin position="1"/>
        <end position="124"/>
    </location>
</feature>
<feature type="region of interest" description="Disordered" evidence="5">
    <location>
        <begin position="152"/>
        <end position="203"/>
    </location>
</feature>
<feature type="region of interest" description="Disordered" evidence="5">
    <location>
        <begin position="518"/>
        <end position="613"/>
    </location>
</feature>
<feature type="region of interest" description="Spectrin--actin-binding">
    <location>
        <begin position="615"/>
        <end position="659"/>
    </location>
</feature>
<feature type="region of interest" description="C-terminal (CTD)">
    <location>
        <begin position="660"/>
        <end position="810"/>
    </location>
</feature>
<feature type="compositionally biased region" description="Basic and acidic residues" evidence="5">
    <location>
        <begin position="62"/>
        <end position="76"/>
    </location>
</feature>
<feature type="compositionally biased region" description="Basic and acidic residues" evidence="5">
    <location>
        <begin position="102"/>
        <end position="118"/>
    </location>
</feature>
<feature type="compositionally biased region" description="Basic and acidic residues" evidence="5">
    <location>
        <begin position="160"/>
        <end position="200"/>
    </location>
</feature>
<feature type="compositionally biased region" description="Basic and acidic residues" evidence="5">
    <location>
        <begin position="587"/>
        <end position="601"/>
    </location>
</feature>
<feature type="modified residue" description="Phosphoserine" evidence="2">
    <location>
        <position position="14"/>
    </location>
</feature>
<feature type="modified residue" description="Phosphothreonine" evidence="2">
    <location>
        <position position="61"/>
    </location>
</feature>
<feature type="modified residue" description="Phosphoserine" evidence="2">
    <location>
        <position position="85"/>
    </location>
</feature>
<feature type="modified residue" description="Phosphoserine" evidence="2">
    <location>
        <position position="86"/>
    </location>
</feature>
<feature type="modified residue" description="Phosphoserine" evidence="2">
    <location>
        <position position="96"/>
    </location>
</feature>
<feature type="modified residue" description="Phosphoserine" evidence="2">
    <location>
        <position position="105"/>
    </location>
</feature>
<feature type="modified residue" description="Phosphoserine" evidence="3">
    <location>
        <position position="122"/>
    </location>
</feature>
<feature type="modified residue" description="Phosphoserine" evidence="2">
    <location>
        <position position="150"/>
    </location>
</feature>
<feature type="modified residue" description="Phosphoserine" evidence="2">
    <location>
        <position position="152"/>
    </location>
</feature>
<feature type="modified residue" description="Phosphoserine" evidence="2">
    <location>
        <position position="153"/>
    </location>
</feature>
<feature type="modified residue" description="Phosphoserine" evidence="2">
    <location>
        <position position="189"/>
    </location>
</feature>
<feature type="modified residue" description="Phosphoserine" evidence="2">
    <location>
        <position position="192"/>
    </location>
</feature>
<feature type="modified residue" description="Phosphotyrosine" evidence="3">
    <location>
        <position position="223"/>
    </location>
</feature>
<feature type="modified residue" description="Phosphothreonine" evidence="2">
    <location>
        <position position="379"/>
    </location>
</feature>
<feature type="modified residue" description="Phosphoserine" evidence="2">
    <location>
        <position position="522"/>
    </location>
</feature>
<feature type="modified residue" description="Phosphoserine" evidence="2">
    <location>
        <position position="541"/>
    </location>
</feature>
<feature type="modified residue" description="Phosphoserine" evidence="2">
    <location>
        <position position="543"/>
    </location>
</feature>
<feature type="modified residue" description="Phosphoserine" evidence="2">
    <location>
        <position position="555"/>
    </location>
</feature>
<feature type="modified residue" description="Phosphoserine" evidence="2">
    <location>
        <position position="620"/>
    </location>
</feature>
<feature type="modified residue" description="Phosphoserine" evidence="2">
    <location>
        <position position="630"/>
    </location>
</feature>
<feature type="modified residue" description="Phosphoserine" evidence="2">
    <location>
        <position position="655"/>
    </location>
</feature>
<feature type="modified residue" description="Phosphoserine" evidence="2">
    <location>
        <position position="658"/>
    </location>
</feature>
<feature type="modified residue" description="Phosphothreonine" evidence="2">
    <location>
        <position position="682"/>
    </location>
</feature>
<feature type="modified residue" description="Phosphothreonine" evidence="2">
    <location>
        <position position="805"/>
    </location>
</feature>
<organism>
    <name type="scientific">Canis lupus familiaris</name>
    <name type="common">Dog</name>
    <name type="synonym">Canis familiaris</name>
    <dbReference type="NCBI Taxonomy" id="9615"/>
    <lineage>
        <taxon>Eukaryota</taxon>
        <taxon>Metazoa</taxon>
        <taxon>Chordata</taxon>
        <taxon>Craniata</taxon>
        <taxon>Vertebrata</taxon>
        <taxon>Euteleostomi</taxon>
        <taxon>Mammalia</taxon>
        <taxon>Eutheria</taxon>
        <taxon>Laurasiatheria</taxon>
        <taxon>Carnivora</taxon>
        <taxon>Caniformia</taxon>
        <taxon>Canidae</taxon>
        <taxon>Canis</taxon>
    </lineage>
</organism>
<dbReference type="EMBL" id="AY553843">
    <property type="protein sequence ID" value="AAS59144.1"/>
    <property type="molecule type" value="mRNA"/>
</dbReference>
<dbReference type="RefSeq" id="NP_001003362.1">
    <property type="nucleotide sequence ID" value="NM_001003362.1"/>
</dbReference>
<dbReference type="RefSeq" id="XP_013962011.1">
    <property type="nucleotide sequence ID" value="XM_014106536.1"/>
</dbReference>
<dbReference type="BMRB" id="Q6Q7P4"/>
<dbReference type="SMR" id="Q6Q7P4"/>
<dbReference type="BioGRID" id="139998">
    <property type="interactions" value="1"/>
</dbReference>
<dbReference type="FunCoup" id="Q6Q7P4">
    <property type="interactions" value="979"/>
</dbReference>
<dbReference type="STRING" id="9615.ENSCAFP00000048815"/>
<dbReference type="PaxDb" id="9612-ENSCAFP00000041578"/>
<dbReference type="GeneID" id="442955"/>
<dbReference type="KEGG" id="cfa:442955"/>
<dbReference type="CTD" id="2035"/>
<dbReference type="eggNOG" id="KOG3527">
    <property type="taxonomic scope" value="Eukaryota"/>
</dbReference>
<dbReference type="InParanoid" id="Q6Q7P4"/>
<dbReference type="OrthoDB" id="6589456at2759"/>
<dbReference type="Proteomes" id="UP000002254">
    <property type="component" value="Unplaced"/>
</dbReference>
<dbReference type="Proteomes" id="UP000694429">
    <property type="component" value="Unplaced"/>
</dbReference>
<dbReference type="Proteomes" id="UP000694542">
    <property type="component" value="Unplaced"/>
</dbReference>
<dbReference type="Proteomes" id="UP000805418">
    <property type="component" value="Unplaced"/>
</dbReference>
<dbReference type="GO" id="GO:0016323">
    <property type="term" value="C:basolateral plasma membrane"/>
    <property type="evidence" value="ECO:0000250"/>
    <property type="project" value="UniProtKB"/>
</dbReference>
<dbReference type="GO" id="GO:0005938">
    <property type="term" value="C:cell cortex"/>
    <property type="evidence" value="ECO:0000250"/>
    <property type="project" value="UniProtKB"/>
</dbReference>
<dbReference type="GO" id="GO:0005856">
    <property type="term" value="C:cytoskeleton"/>
    <property type="evidence" value="ECO:0000318"/>
    <property type="project" value="GO_Central"/>
</dbReference>
<dbReference type="GO" id="GO:0005634">
    <property type="term" value="C:nucleus"/>
    <property type="evidence" value="ECO:0007669"/>
    <property type="project" value="UniProtKB-SubCell"/>
</dbReference>
<dbReference type="GO" id="GO:0005886">
    <property type="term" value="C:plasma membrane"/>
    <property type="evidence" value="ECO:0000318"/>
    <property type="project" value="GO_Central"/>
</dbReference>
<dbReference type="GO" id="GO:0003779">
    <property type="term" value="F:actin binding"/>
    <property type="evidence" value="ECO:0007669"/>
    <property type="project" value="UniProtKB-KW"/>
</dbReference>
<dbReference type="GO" id="GO:0005516">
    <property type="term" value="F:calmodulin binding"/>
    <property type="evidence" value="ECO:0007669"/>
    <property type="project" value="UniProtKB-KW"/>
</dbReference>
<dbReference type="GO" id="GO:0005198">
    <property type="term" value="F:structural molecule activity"/>
    <property type="evidence" value="ECO:0007669"/>
    <property type="project" value="InterPro"/>
</dbReference>
<dbReference type="GO" id="GO:0031032">
    <property type="term" value="P:actomyosin structure organization"/>
    <property type="evidence" value="ECO:0000318"/>
    <property type="project" value="GO_Central"/>
</dbReference>
<dbReference type="GO" id="GO:0051301">
    <property type="term" value="P:cell division"/>
    <property type="evidence" value="ECO:0007669"/>
    <property type="project" value="UniProtKB-KW"/>
</dbReference>
<dbReference type="GO" id="GO:0030866">
    <property type="term" value="P:cortical actin cytoskeleton organization"/>
    <property type="evidence" value="ECO:0007669"/>
    <property type="project" value="InterPro"/>
</dbReference>
<dbReference type="GO" id="GO:1904778">
    <property type="term" value="P:positive regulation of protein localization to cell cortex"/>
    <property type="evidence" value="ECO:0000250"/>
    <property type="project" value="UniProtKB"/>
</dbReference>
<dbReference type="GO" id="GO:0051924">
    <property type="term" value="P:regulation of calcium ion transport"/>
    <property type="evidence" value="ECO:0000250"/>
    <property type="project" value="UniProtKB"/>
</dbReference>
<dbReference type="GO" id="GO:1904478">
    <property type="term" value="P:regulation of intestinal absorption"/>
    <property type="evidence" value="ECO:0000250"/>
    <property type="project" value="UniProtKB"/>
</dbReference>
<dbReference type="CDD" id="cd14473">
    <property type="entry name" value="FERM_B-lobe"/>
    <property type="match status" value="1"/>
</dbReference>
<dbReference type="CDD" id="cd13184">
    <property type="entry name" value="FERM_C_4_1_family"/>
    <property type="match status" value="1"/>
</dbReference>
<dbReference type="CDD" id="cd17105">
    <property type="entry name" value="FERM_F1_EPB41"/>
    <property type="match status" value="1"/>
</dbReference>
<dbReference type="FunFam" id="1.20.80.10:FF:000001">
    <property type="entry name" value="Erythrocyte membrane protein band 4.1"/>
    <property type="match status" value="1"/>
</dbReference>
<dbReference type="FunFam" id="2.30.29.30:FF:000001">
    <property type="entry name" value="Erythrocyte membrane protein band 4.1"/>
    <property type="match status" value="1"/>
</dbReference>
<dbReference type="FunFam" id="3.10.20.90:FF:000002">
    <property type="entry name" value="Erythrocyte protein band 4.1-like 3"/>
    <property type="match status" value="1"/>
</dbReference>
<dbReference type="Gene3D" id="1.20.80.10">
    <property type="match status" value="1"/>
</dbReference>
<dbReference type="Gene3D" id="3.10.20.90">
    <property type="entry name" value="Phosphatidylinositol 3-kinase Catalytic Subunit, Chain A, domain 1"/>
    <property type="match status" value="1"/>
</dbReference>
<dbReference type="Gene3D" id="2.30.29.30">
    <property type="entry name" value="Pleckstrin-homology domain (PH domain)/Phosphotyrosine-binding domain (PTB)"/>
    <property type="match status" value="1"/>
</dbReference>
<dbReference type="InterPro" id="IPR008379">
    <property type="entry name" value="Band_4.1_C"/>
</dbReference>
<dbReference type="InterPro" id="IPR019749">
    <property type="entry name" value="Band_41_domain"/>
</dbReference>
<dbReference type="InterPro" id="IPR021187">
    <property type="entry name" value="EPB4.1_FERM_F1"/>
</dbReference>
<dbReference type="InterPro" id="IPR000798">
    <property type="entry name" value="Ez/rad/moesin-like"/>
</dbReference>
<dbReference type="InterPro" id="IPR014847">
    <property type="entry name" value="FA"/>
</dbReference>
<dbReference type="InterPro" id="IPR014352">
    <property type="entry name" value="FERM/acyl-CoA-bd_prot_sf"/>
</dbReference>
<dbReference type="InterPro" id="IPR035963">
    <property type="entry name" value="FERM_2"/>
</dbReference>
<dbReference type="InterPro" id="IPR019748">
    <property type="entry name" value="FERM_central"/>
</dbReference>
<dbReference type="InterPro" id="IPR019747">
    <property type="entry name" value="FERM_CS"/>
</dbReference>
<dbReference type="InterPro" id="IPR000299">
    <property type="entry name" value="FERM_domain"/>
</dbReference>
<dbReference type="InterPro" id="IPR018979">
    <property type="entry name" value="FERM_N"/>
</dbReference>
<dbReference type="InterPro" id="IPR018980">
    <property type="entry name" value="FERM_PH-like_C"/>
</dbReference>
<dbReference type="InterPro" id="IPR011993">
    <property type="entry name" value="PH-like_dom_sf"/>
</dbReference>
<dbReference type="InterPro" id="IPR007477">
    <property type="entry name" value="SAB_dom"/>
</dbReference>
<dbReference type="InterPro" id="IPR029071">
    <property type="entry name" value="Ubiquitin-like_domsf"/>
</dbReference>
<dbReference type="PANTHER" id="PTHR23280">
    <property type="entry name" value="4.1 G PROTEIN"/>
    <property type="match status" value="1"/>
</dbReference>
<dbReference type="PANTHER" id="PTHR23280:SF12">
    <property type="entry name" value="PROTEIN 4.1"/>
    <property type="match status" value="1"/>
</dbReference>
<dbReference type="Pfam" id="PF05902">
    <property type="entry name" value="4_1_CTD"/>
    <property type="match status" value="1"/>
</dbReference>
<dbReference type="Pfam" id="PF08736">
    <property type="entry name" value="FA"/>
    <property type="match status" value="1"/>
</dbReference>
<dbReference type="Pfam" id="PF09380">
    <property type="entry name" value="FERM_C"/>
    <property type="match status" value="1"/>
</dbReference>
<dbReference type="Pfam" id="PF00373">
    <property type="entry name" value="FERM_M"/>
    <property type="match status" value="1"/>
</dbReference>
<dbReference type="Pfam" id="PF09379">
    <property type="entry name" value="FERM_N"/>
    <property type="match status" value="1"/>
</dbReference>
<dbReference type="Pfam" id="PF04382">
    <property type="entry name" value="SAB"/>
    <property type="match status" value="1"/>
</dbReference>
<dbReference type="PIRSF" id="PIRSF002304">
    <property type="entry name" value="Membrane_skeletal_4_1"/>
    <property type="match status" value="1"/>
</dbReference>
<dbReference type="PRINTS" id="PR00935">
    <property type="entry name" value="BAND41"/>
</dbReference>
<dbReference type="PRINTS" id="PR00661">
    <property type="entry name" value="ERMFAMILY"/>
</dbReference>
<dbReference type="SMART" id="SM00295">
    <property type="entry name" value="B41"/>
    <property type="match status" value="1"/>
</dbReference>
<dbReference type="SMART" id="SM01195">
    <property type="entry name" value="FA"/>
    <property type="match status" value="1"/>
</dbReference>
<dbReference type="SMART" id="SM01196">
    <property type="entry name" value="FERM_C"/>
    <property type="match status" value="1"/>
</dbReference>
<dbReference type="SUPFAM" id="SSF50729">
    <property type="entry name" value="PH domain-like"/>
    <property type="match status" value="1"/>
</dbReference>
<dbReference type="SUPFAM" id="SSF47031">
    <property type="entry name" value="Second domain of FERM"/>
    <property type="match status" value="1"/>
</dbReference>
<dbReference type="SUPFAM" id="SSF54236">
    <property type="entry name" value="Ubiquitin-like"/>
    <property type="match status" value="1"/>
</dbReference>
<dbReference type="PROSITE" id="PS00660">
    <property type="entry name" value="FERM_1"/>
    <property type="match status" value="1"/>
</dbReference>
<dbReference type="PROSITE" id="PS00661">
    <property type="entry name" value="FERM_2"/>
    <property type="match status" value="1"/>
</dbReference>
<dbReference type="PROSITE" id="PS50057">
    <property type="entry name" value="FERM_3"/>
    <property type="match status" value="1"/>
</dbReference>
<protein>
    <recommendedName>
        <fullName>Protein 4.1</fullName>
        <shortName>P4.1</shortName>
    </recommendedName>
    <alternativeName>
        <fullName>4.1R</fullName>
    </alternativeName>
    <alternativeName>
        <fullName>Band 4.1</fullName>
    </alternativeName>
    <alternativeName>
        <fullName evidence="2">Erythrocyte membrane protein band 4.1</fullName>
    </alternativeName>
</protein>
<name>EPB41_CANLF</name>
<gene>
    <name evidence="2" type="primary">EPB41</name>
</gene>